<comment type="function">
    <molecule>CD160 antigen</molecule>
    <text evidence="2 4 5 6 8 9 10 12 14">Receptor on immune cells capable to deliver stimulatory or inhibitory signals that regulate cell activation and differentiation. Exists as a GPI-anchored and as a transmembrane form, each likely initiating distinct signaling pathways via phosphoinositol 3-kinase in activated NK cells and via LCK and CD247/CD3 zeta chain in activated T cells (PubMed:11978774, PubMed:17307798, PubMed:19109136). Receptor for both classical and non-classical MHC class I molecules (PubMed:12486241, PubMed:9973372). In the context of acute viral infection, recognizes HLA-C and triggers NK cell cytotoxic activity, likely playing a role in anti-viral innate immune response (PubMed:12486241). On CD8+ T cells, binds HLA-A2-B2M in complex with a viral peptide and provides a costimulatory signal to activated/memory T cells (PubMed:9973372). Upon persistent antigen stimulation, such as occurs during chronic viral infection, may progressively inhibit TCR signaling in memory CD8+ T cells, contributing to T cell exhaustion (PubMed:25255144). On endothelial cells, recognizes HLA-G and controls angiogenesis in immune privileged sites (PubMed:16809620). Receptor or ligand for TNF superfamily member TNFRSF14, participating in bidirectional cell-cell contact signaling between antigen presenting cells and lymphocytes. Upon ligation of TNFRSF14, provides stimulatory signal to NK cells enhancing IFNG production and anti-tumor immune response (By similarity). On activated CD4+ T cells, interacts with TNFRSF14 and down-regulates CD28 costimulatory signaling, restricting memory and alloantigen-specific immune response (PubMed:18193050). In the context of bacterial infection, acts as a ligand for TNFRSF14 on epithelial cells, triggering the production of antimicrobial proteins and pro-inflammatory cytokines (By similarity).</text>
</comment>
<comment type="function">
    <molecule>CD160 antigen, soluble form</molecule>
    <text evidence="7">The soluble GPI-cleaved form, usually released by activated lymphocytes, might play an immune regulatory role by limiting lymphocyte effector functions.</text>
</comment>
<comment type="subunit">
    <text evidence="4 6 9 14 22">Homomultimer; disulfide-linked (Probable). Interacts with HLA-G (PubMed:16809620). Interacts with HLA-A2-B2M in complex with an HIV-derived peptide (PubMed:9973372). Interacts with TNFRSF14 (via cysteine-rich domain 1); this interaction is direct (PubMed:18193050). Interacts with LCK and CD247/CD3 zeta chain (PubMed:11978774).</text>
</comment>
<comment type="interaction">
    <interactant intactId="EBI-4314390">
        <id>O95971</id>
    </interactant>
    <interactant intactId="EBI-741181">
        <id>Q6RW13</id>
        <label>AGTRAP</label>
    </interactant>
    <organismsDiffer>false</organismsDiffer>
    <experiments>3</experiments>
</comment>
<comment type="interaction">
    <interactant intactId="EBI-4314390">
        <id>O95971</id>
    </interactant>
    <interactant intactId="EBI-11522780">
        <id>Q96DZ9-2</id>
        <label>CMTM5</label>
    </interactant>
    <organismsDiffer>false</organismsDiffer>
    <experiments>3</experiments>
</comment>
<comment type="interaction">
    <interactant intactId="EBI-4314390">
        <id>O95971</id>
    </interactant>
    <interactant intactId="EBI-1054315">
        <id>Q9NX76</id>
        <label>CMTM6</label>
    </interactant>
    <organismsDiffer>false</organismsDiffer>
    <experiments>3</experiments>
</comment>
<comment type="interaction">
    <interactant intactId="EBI-4314390">
        <id>O95971</id>
    </interactant>
    <interactant intactId="EBI-944295">
        <id>Q969L2</id>
        <label>MAL2</label>
    </interactant>
    <organismsDiffer>false</organismsDiffer>
    <experiments>3</experiments>
</comment>
<comment type="interaction">
    <interactant intactId="EBI-4314390">
        <id>O95971</id>
    </interactant>
    <interactant intactId="EBI-398437">
        <id>O15151</id>
        <label>MDM4</label>
    </interactant>
    <organismsDiffer>false</organismsDiffer>
    <experiments>6</experiments>
</comment>
<comment type="interaction">
    <interactant intactId="EBI-4314390">
        <id>O95971</id>
    </interactant>
    <interactant intactId="EBI-9071725">
        <id>P08247</id>
        <label>SYP</label>
    </interactant>
    <organismsDiffer>false</organismsDiffer>
    <experiments>3</experiments>
</comment>
<comment type="interaction">
    <interactant intactId="EBI-4314390">
        <id>O95971</id>
    </interactant>
    <interactant intactId="EBI-286285">
        <id>P10827</id>
        <label>THRA</label>
    </interactant>
    <organismsDiffer>false</organismsDiffer>
    <experiments>3</experiments>
</comment>
<comment type="subcellular location">
    <molecule>CD160 antigen</molecule>
    <subcellularLocation>
        <location evidence="5 9 14">Cell membrane</location>
        <topology evidence="11 13">Lipid-anchor</topology>
        <topology evidence="11 13">GPI-anchor</topology>
    </subcellularLocation>
</comment>
<comment type="subcellular location">
    <molecule>CD160 antigen, soluble form</molecule>
    <subcellularLocation>
        <location>Secreted</location>
    </subcellularLocation>
    <text evidence="7 11 13">Released from the cell membrane by GPI cleavage.</text>
</comment>
<comment type="alternative products">
    <event type="alternative splicing"/>
    <isoform>
        <id>O95971-1</id>
        <name>1</name>
        <name evidence="17">CD160</name>
        <sequence type="displayed"/>
    </isoform>
    <isoform>
        <id>O95971-2</id>
        <name>2</name>
        <name evidence="17">CD160deltaIg</name>
        <sequence type="described" ref="VSP_060018"/>
    </isoform>
    <isoform>
        <id>O95971-3</id>
        <name>3</name>
        <name evidence="17">CD160-TM</name>
        <sequence type="described" ref="VSP_060019"/>
    </isoform>
    <isoform>
        <id>O95971-4</id>
        <name>4</name>
        <name evidence="17">CD160deltaIg-TM</name>
        <sequence type="described" ref="VSP_060017"/>
    </isoform>
</comment>
<comment type="tissue specificity">
    <text evidence="4 6 9 10 11 12 13">Expression is restricted to functional NK and cytotoxic T lymphocytes. Expressed in viral-specific effector memory and terminally differentiated effector memory CD8+ T cells. Expressed in memory and activated CD4+ T cell subsets (at protein level) (PubMed:11978774, PubMed:18193050, PubMed:25255144, PubMed:9743336). Expressed at high levels in intraepithelial lymphocytes (at protein level) (PubMed:9743336). Expressed in both alpha-beta and gamma-delta CD8+ T cell subsets (at protein level) (PubMed:11978774, PubMed:18193050, PubMed:9743336). Expressed in umbilical vein endothelial cells (at protein level) (PubMed:16809620). Expressed in monocytes and at lower levels in B cells (PubMed:23761635). Isoform 3: Expressed exclusively in activated NK cells (at protein level) (PubMed:19109136).</text>
</comment>
<comment type="induction">
    <text evidence="7 9">Up-regulated on CD4+ T cells upon stimulation via T cell receptor plus costimulation via CD28 (PubMed:18193050). Up-regulated by IL15 on immunoregulatory NCAM1/CD56-bright NK cells (PubMed:17237375).</text>
</comment>
<comment type="miscellaneous">
    <molecule>Isoform 3</molecule>
    <text evidence="10">Mutagenesis of Tyr-225 to Phe abolishes intracellular signaling.</text>
</comment>
<protein>
    <recommendedName>
        <fullName>CD160 antigen</fullName>
    </recommendedName>
    <alternativeName>
        <fullName>Natural killer cell receptor BY55</fullName>
    </alternativeName>
    <cdAntigenName evidence="15">CD160</cdAntigenName>
    <component>
        <recommendedName>
            <fullName evidence="16">CD160 antigen, soluble form</fullName>
        </recommendedName>
    </component>
</protein>
<gene>
    <name evidence="15 23" type="primary">CD160</name>
    <name evidence="18" type="synonym">BY55</name>
</gene>
<sequence length="181" mass="19810">MLLEPGRGCCALAILLAIVDIQSGGCINITSSASQEGTRLNLICTVWHKKEEAEGFVVFLCKDRSGDCSPETSLKQLRLKRDPGIDGVGEISSQLMFTISQVTPLHSGTYQCCARSQKSGIRLQGHFFSILFTETGNYTVTGLKQRQHLEFSHNEGTLSSGFLQEKVWVMLVTSLVALQAL</sequence>
<accession>O95971</accession>
<accession>A0A0B4J2A1</accession>
<accession>B8PRF2</accession>
<accession>Q5T2V6</accession>
<proteinExistence type="evidence at protein level"/>
<feature type="signal peptide" evidence="3">
    <location>
        <begin position="1"/>
        <end position="24"/>
    </location>
</feature>
<feature type="chain" id="PRO_0000014543" description="CD160 antigen">
    <location>
        <begin position="25"/>
        <end position="159"/>
    </location>
</feature>
<feature type="chain" id="PRO_0000446049" description="CD160 antigen, soluble form" evidence="19 21 22">
    <location>
        <begin position="25"/>
        <end position="159"/>
    </location>
</feature>
<feature type="propeptide" id="PRO_0000014544" description="Removed in mature form" evidence="3">
    <location>
        <begin position="160"/>
        <end position="181"/>
    </location>
</feature>
<feature type="domain" description="Ig-like V-type" evidence="20">
    <location>
        <begin position="25"/>
        <end position="133"/>
    </location>
</feature>
<feature type="lipid moiety-binding region" description="GPI-anchor amidated serine" evidence="1">
    <location>
        <position position="159"/>
    </location>
</feature>
<feature type="glycosylation site" description="N-linked (GlcNAc...) asparagine" evidence="3">
    <location>
        <position position="28"/>
    </location>
</feature>
<feature type="glycosylation site" description="N-linked (GlcNAc...) asparagine" evidence="3">
    <location>
        <position position="137"/>
    </location>
</feature>
<feature type="disulfide bond" evidence="3">
    <location>
        <begin position="44"/>
        <end position="112"/>
    </location>
</feature>
<feature type="disulfide bond" evidence="3">
    <location>
        <begin position="61"/>
        <end position="68"/>
    </location>
</feature>
<feature type="splice variant" id="VSP_060017" description="In isoform 4.">
    <original>GCINITSSASQEGTRLNLICTVWHKKEEAEGFVVFLCKDRSGDCSPETSLKQLRLKRDPGIDGVGEISSQLMFTISQVTPLHSGTYQCCARSQKSGIRLQGHFFSILFTETGNYTVTGLKQRQHLEFSHNEGTLSSGFLQEKVWVMLVTSLVALQAL</original>
    <variation>ETGNYTVTGLKQRQHLEFSHNEGTLSSGFLQEKVWVMLVTSLVALQGMSKRAVSTPSNEGAIIFLPPWLFSRRRRLERMSRGREKCYSSPGYPQESSNQFH</variation>
    <location>
        <begin position="25"/>
        <end position="181"/>
    </location>
</feature>
<feature type="splice variant" id="VSP_060018" description="In isoform 2.">
    <location>
        <begin position="25"/>
        <end position="133"/>
    </location>
</feature>
<feature type="splice variant" id="VSP_060019" description="In isoform 3." evidence="20">
    <original>AL</original>
    <variation>GMSKRAVSTPSNEGAIIFLPPWLFSRRRRLERMSRGREKCYSSPGYPQESSNQFH</variation>
    <location>
        <begin position="180"/>
        <end position="181"/>
    </location>
</feature>
<feature type="sequence variant" id="VAR_027747" description="In dbSNP:rs2231373.">
    <original>I</original>
    <variation>V</variation>
    <location>
        <position position="91"/>
    </location>
</feature>
<feature type="strand" evidence="25">
    <location>
        <begin position="28"/>
        <end position="36"/>
    </location>
</feature>
<feature type="strand" evidence="25">
    <location>
        <begin position="39"/>
        <end position="47"/>
    </location>
</feature>
<feature type="helix" evidence="24">
    <location>
        <begin position="50"/>
        <end position="52"/>
    </location>
</feature>
<feature type="strand" evidence="25">
    <location>
        <begin position="54"/>
        <end position="63"/>
    </location>
</feature>
<feature type="helix" evidence="25">
    <location>
        <begin position="70"/>
        <end position="72"/>
    </location>
</feature>
<feature type="strand" evidence="25">
    <location>
        <begin position="74"/>
        <end position="77"/>
    </location>
</feature>
<feature type="strand" evidence="25">
    <location>
        <begin position="88"/>
        <end position="101"/>
    </location>
</feature>
<feature type="helix" evidence="25">
    <location>
        <begin position="104"/>
        <end position="106"/>
    </location>
</feature>
<feature type="strand" evidence="25">
    <location>
        <begin position="108"/>
        <end position="116"/>
    </location>
</feature>
<feature type="turn" evidence="25">
    <location>
        <begin position="117"/>
        <end position="119"/>
    </location>
</feature>
<feature type="strand" evidence="25">
    <location>
        <begin position="122"/>
        <end position="124"/>
    </location>
</feature>
<feature type="strand" evidence="25">
    <location>
        <begin position="128"/>
        <end position="132"/>
    </location>
</feature>
<feature type="strand" evidence="25">
    <location>
        <begin position="138"/>
        <end position="141"/>
    </location>
</feature>
<name>BY55_HUMAN</name>
<reference key="1">
    <citation type="journal article" date="1998" name="J. Immunol.">
        <title>Cloning of BY55, a novel Ig superfamily member expressed on NK cells, CTL, and intestinal intraepithelial lymphocytes.</title>
        <authorList>
            <person name="Anumanthan A."/>
            <person name="Bensussan A."/>
            <person name="Boumsell L."/>
            <person name="Christ A.D."/>
            <person name="Blumberg R.S."/>
            <person name="Voss S.D."/>
            <person name="Patel A.T."/>
            <person name="Robertson M.J."/>
            <person name="Nadler L.M."/>
            <person name="Freeman G.J."/>
        </authorList>
    </citation>
    <scope>NUCLEOTIDE SEQUENCE [MRNA] (ISOFORM 1)</scope>
    <scope>TISSUE SPECIFICITY</scope>
    <scope>SUBCELLULAR LOCATION</scope>
    <scope>SUBUNIT</scope>
</reference>
<reference key="2">
    <citation type="journal article" date="2009" name="J. Immunol.">
        <title>Identification and characterization of a transmembrane isoform of CD160 (CD160-TM), a unique activating receptor selectively expressed upon human NK cell activation.</title>
        <authorList>
            <person name="Giustiniani J."/>
            <person name="Bensussan A."/>
            <person name="Marie-Cardine A."/>
        </authorList>
    </citation>
    <scope>NUCLEOTIDE SEQUENCE [MRNA] (ISOFORMS 2 AND 3)</scope>
    <scope>ALTERNATIVE SPLICING</scope>
    <scope>TISSUE SPECIFICITY</scope>
    <scope>FUNCTION</scope>
</reference>
<reference key="3">
    <citation type="journal article" date="2006" name="Nature">
        <title>The DNA sequence and biological annotation of human chromosome 1.</title>
        <authorList>
            <person name="Gregory S.G."/>
            <person name="Barlow K.F."/>
            <person name="McLay K.E."/>
            <person name="Kaul R."/>
            <person name="Swarbreck D."/>
            <person name="Dunham A."/>
            <person name="Scott C.E."/>
            <person name="Howe K.L."/>
            <person name="Woodfine K."/>
            <person name="Spencer C.C.A."/>
            <person name="Jones M.C."/>
            <person name="Gillson C."/>
            <person name="Searle S."/>
            <person name="Zhou Y."/>
            <person name="Kokocinski F."/>
            <person name="McDonald L."/>
            <person name="Evans R."/>
            <person name="Phillips K."/>
            <person name="Atkinson A."/>
            <person name="Cooper R."/>
            <person name="Jones C."/>
            <person name="Hall R.E."/>
            <person name="Andrews T.D."/>
            <person name="Lloyd C."/>
            <person name="Ainscough R."/>
            <person name="Almeida J.P."/>
            <person name="Ambrose K.D."/>
            <person name="Anderson F."/>
            <person name="Andrew R.W."/>
            <person name="Ashwell R.I.S."/>
            <person name="Aubin K."/>
            <person name="Babbage A.K."/>
            <person name="Bagguley C.L."/>
            <person name="Bailey J."/>
            <person name="Beasley H."/>
            <person name="Bethel G."/>
            <person name="Bird C.P."/>
            <person name="Bray-Allen S."/>
            <person name="Brown J.Y."/>
            <person name="Brown A.J."/>
            <person name="Buckley D."/>
            <person name="Burton J."/>
            <person name="Bye J."/>
            <person name="Carder C."/>
            <person name="Chapman J.C."/>
            <person name="Clark S.Y."/>
            <person name="Clarke G."/>
            <person name="Clee C."/>
            <person name="Cobley V."/>
            <person name="Collier R.E."/>
            <person name="Corby N."/>
            <person name="Coville G.J."/>
            <person name="Davies J."/>
            <person name="Deadman R."/>
            <person name="Dunn M."/>
            <person name="Earthrowl M."/>
            <person name="Ellington A.G."/>
            <person name="Errington H."/>
            <person name="Frankish A."/>
            <person name="Frankland J."/>
            <person name="French L."/>
            <person name="Garner P."/>
            <person name="Garnett J."/>
            <person name="Gay L."/>
            <person name="Ghori M.R.J."/>
            <person name="Gibson R."/>
            <person name="Gilby L.M."/>
            <person name="Gillett W."/>
            <person name="Glithero R.J."/>
            <person name="Grafham D.V."/>
            <person name="Griffiths C."/>
            <person name="Griffiths-Jones S."/>
            <person name="Grocock R."/>
            <person name="Hammond S."/>
            <person name="Harrison E.S.I."/>
            <person name="Hart E."/>
            <person name="Haugen E."/>
            <person name="Heath P.D."/>
            <person name="Holmes S."/>
            <person name="Holt K."/>
            <person name="Howden P.J."/>
            <person name="Hunt A.R."/>
            <person name="Hunt S.E."/>
            <person name="Hunter G."/>
            <person name="Isherwood J."/>
            <person name="James R."/>
            <person name="Johnson C."/>
            <person name="Johnson D."/>
            <person name="Joy A."/>
            <person name="Kay M."/>
            <person name="Kershaw J.K."/>
            <person name="Kibukawa M."/>
            <person name="Kimberley A.M."/>
            <person name="King A."/>
            <person name="Knights A.J."/>
            <person name="Lad H."/>
            <person name="Laird G."/>
            <person name="Lawlor S."/>
            <person name="Leongamornlert D.A."/>
            <person name="Lloyd D.M."/>
            <person name="Loveland J."/>
            <person name="Lovell J."/>
            <person name="Lush M.J."/>
            <person name="Lyne R."/>
            <person name="Martin S."/>
            <person name="Mashreghi-Mohammadi M."/>
            <person name="Matthews L."/>
            <person name="Matthews N.S.W."/>
            <person name="McLaren S."/>
            <person name="Milne S."/>
            <person name="Mistry S."/>
            <person name="Moore M.J.F."/>
            <person name="Nickerson T."/>
            <person name="O'Dell C.N."/>
            <person name="Oliver K."/>
            <person name="Palmeiri A."/>
            <person name="Palmer S.A."/>
            <person name="Parker A."/>
            <person name="Patel D."/>
            <person name="Pearce A.V."/>
            <person name="Peck A.I."/>
            <person name="Pelan S."/>
            <person name="Phelps K."/>
            <person name="Phillimore B.J."/>
            <person name="Plumb R."/>
            <person name="Rajan J."/>
            <person name="Raymond C."/>
            <person name="Rouse G."/>
            <person name="Saenphimmachak C."/>
            <person name="Sehra H.K."/>
            <person name="Sheridan E."/>
            <person name="Shownkeen R."/>
            <person name="Sims S."/>
            <person name="Skuce C.D."/>
            <person name="Smith M."/>
            <person name="Steward C."/>
            <person name="Subramanian S."/>
            <person name="Sycamore N."/>
            <person name="Tracey A."/>
            <person name="Tromans A."/>
            <person name="Van Helmond Z."/>
            <person name="Wall M."/>
            <person name="Wallis J.M."/>
            <person name="White S."/>
            <person name="Whitehead S.L."/>
            <person name="Wilkinson J.E."/>
            <person name="Willey D.L."/>
            <person name="Williams H."/>
            <person name="Wilming L."/>
            <person name="Wray P.W."/>
            <person name="Wu Z."/>
            <person name="Coulson A."/>
            <person name="Vaudin M."/>
            <person name="Sulston J.E."/>
            <person name="Durbin R.M."/>
            <person name="Hubbard T."/>
            <person name="Wooster R."/>
            <person name="Dunham I."/>
            <person name="Carter N.P."/>
            <person name="McVean G."/>
            <person name="Ross M.T."/>
            <person name="Harrow J."/>
            <person name="Olson M.V."/>
            <person name="Beck S."/>
            <person name="Rogers J."/>
            <person name="Bentley D.R."/>
        </authorList>
    </citation>
    <scope>NUCLEOTIDE SEQUENCE [LARGE SCALE GENOMIC DNA]</scope>
</reference>
<reference key="4">
    <citation type="journal article" date="2004" name="Genome Res.">
        <title>The status, quality, and expansion of the NIH full-length cDNA project: the Mammalian Gene Collection (MGC).</title>
        <authorList>
            <consortium name="The MGC Project Team"/>
        </authorList>
    </citation>
    <scope>NUCLEOTIDE SEQUENCE [LARGE SCALE MRNA]</scope>
    <source>
        <tissue>Blood</tissue>
    </source>
</reference>
<reference key="5">
    <citation type="journal article" date="1999" name="J. Immunol.">
        <title>MHC class I triggering by a novel cell surface ligand costimulates proliferation of activated human T cells.</title>
        <authorList>
            <person name="Agrawal S."/>
            <person name="Marquet J."/>
            <person name="Freeman G.J."/>
            <person name="Tawab A."/>
            <person name="Bouteiller P.L."/>
            <person name="Roth P."/>
            <person name="Bolton W."/>
            <person name="Ogg G."/>
            <person name="Boumsell L."/>
            <person name="Bensussan A."/>
        </authorList>
    </citation>
    <scope>FUNCTION</scope>
    <scope>SUBCELLULAR LOCATION</scope>
    <scope>SUBUNIT</scope>
    <scope>INTERACTION WITH HLA-A2-B2M</scope>
</reference>
<reference key="6">
    <citation type="journal article" date="2002" name="Int. Immunol.">
        <title>BY55/CD160 acts as a co-receptor in TCR signal transduction of a human circulating cytotoxic effector T lymphocyte subset lacking CD28 expression.</title>
        <authorList>
            <person name="Nikolova M."/>
            <person name="Marie-Cardine A."/>
            <person name="Boumsell L."/>
            <person name="Bensussan A."/>
        </authorList>
    </citation>
    <scope>FUNCTION</scope>
    <scope>SUBUNIT</scope>
    <scope>INTERACTION WITH LCK</scope>
    <scope>INTERACTION WITH CD247</scope>
    <scope>TISSUE SPECIFICITY</scope>
</reference>
<reference key="7">
    <citation type="journal article" date="2002" name="Proc. Natl. Acad. Sci. U.S.A.">
        <title>Engagement of CD160 receptor by HLA-C is a triggering mechanism used by circulating natural killer (NK) cells to mediate cytotoxicity.</title>
        <authorList>
            <person name="Le Bouteiller P."/>
            <person name="Barakonyi A."/>
            <person name="Giustiniani J."/>
            <person name="Lenfant F."/>
            <person name="Marie-Cardine A."/>
            <person name="Aguerre-Girr M."/>
            <person name="Rabot M."/>
            <person name="Hilgert I."/>
            <person name="Mami-Chouaib F."/>
            <person name="Tabiasco J."/>
            <person name="Boumsell L."/>
            <person name="Bensussan A."/>
        </authorList>
    </citation>
    <scope>FUNCTION</scope>
    <scope>SUBCELLULAR LOCATION</scope>
</reference>
<reference key="8">
    <citation type="journal article" date="2006" name="Blood">
        <title>Soluble HLA-G1 inhibits angiogenesis through an apoptotic pathway and by direct binding to CD160 receptor expressed by endothelial cells.</title>
        <authorList>
            <person name="Fons P."/>
            <person name="Chabot S."/>
            <person name="Cartwright J.E."/>
            <person name="Lenfant F."/>
            <person name="L'Faqihi F."/>
            <person name="Giustiniani J."/>
            <person name="Herault J.P."/>
            <person name="Gueguen G."/>
            <person name="Bono F."/>
            <person name="Savi P."/>
            <person name="Aguerre-Girr M."/>
            <person name="Fournel S."/>
            <person name="Malecaze F."/>
            <person name="Bensussan A."/>
            <person name="Plouet J."/>
            <person name="Le Bouteiller P."/>
        </authorList>
    </citation>
    <scope>FUNCTION</scope>
    <scope>SUBUNIT</scope>
    <scope>INTERACTION WITH HLA-G</scope>
    <scope>TISSUE SPECIFICITY</scope>
</reference>
<reference key="9">
    <citation type="journal article" date="2007" name="Int. Immunol.">
        <title>CD160-activating NK cell effector functions depend on the phosphatidylinositol 3-kinase recruitment.</title>
        <authorList>
            <person name="Rabot M."/>
            <person name="El Costa H."/>
            <person name="Polgar B."/>
            <person name="Marie-Cardine A."/>
            <person name="Aguerre-Girr M."/>
            <person name="Barakonyi A."/>
            <person name="Valitutti S."/>
            <person name="Bensussan A."/>
            <person name="Le Bouteiller P."/>
        </authorList>
    </citation>
    <scope>FUNCTION</scope>
</reference>
<reference key="10">
    <citation type="journal article" date="2007" name="J. Immunol.">
        <title>A soluble form of the MHC class I-specific CD160 receptor is released from human activated NK lymphocytes and inhibits cell-mediated cytotoxicity.</title>
        <authorList>
            <person name="Giustiniani J."/>
            <person name="Marie-Cardine A."/>
            <person name="Bensussan A."/>
        </authorList>
    </citation>
    <scope>FUNCTION</scope>
    <scope>SUBCELLULAR LOCATION</scope>
    <scope>INDUCTION BY IL15</scope>
</reference>
<reference key="11">
    <citation type="journal article" date="2008" name="Nat. Immunol.">
        <title>CD160 inhibits activation of human CD4+ T cells through interaction with herpesvirus entry mediator.</title>
        <authorList>
            <person name="Cai G."/>
            <person name="Anumanthan A."/>
            <person name="Brown J.A."/>
            <person name="Greenfield E.A."/>
            <person name="Zhu B."/>
            <person name="Freeman G.J."/>
        </authorList>
    </citation>
    <scope>FUNCTION</scope>
    <scope>TISSUE SPECIFICITY</scope>
    <scope>INDUCTION</scope>
    <scope>SUBCELLULAR LOCATION</scope>
    <scope>SUBUNIT</scope>
    <scope>INTERACTION WITH TNFRSF14</scope>
</reference>
<reference key="12">
    <citation type="journal article" date="2013" name="J. Immunol.">
        <title>CD160 activation by herpesvirus entry mediator augments inflammatory cytokine production and cytolytic function by NK cells.</title>
        <authorList>
            <person name="Sedy J.R."/>
            <person name="Bjordahl R.L."/>
            <person name="Bekiaris V."/>
            <person name="Macauley M.G."/>
            <person name="Ware B.C."/>
            <person name="Norris P.S."/>
            <person name="Lurain N.S."/>
            <person name="Benedict C.A."/>
            <person name="Ware C.F."/>
        </authorList>
    </citation>
    <scope>TISSUE SPECIFICITY</scope>
    <scope>SUBUNIT</scope>
    <scope>INTERACTION WITH TNFRSF14</scope>
    <scope>SUBCELLULAR LOCATION</scope>
</reference>
<reference key="13">
    <citation type="journal article" date="2014" name="PLoS Pathog.">
        <title>CD160-associated CD8 T-cell functional impairment is independent of PD-1 expression.</title>
        <authorList>
            <person name="Vigano S."/>
            <person name="Banga R."/>
            <person name="Bellanger F."/>
            <person name="Pellaton C."/>
            <person name="Farina A."/>
            <person name="Comte D."/>
            <person name="Harari A."/>
            <person name="Perreau M."/>
        </authorList>
    </citation>
    <scope>FUNCTION</scope>
    <scope>TISSUE SPECIFICITY</scope>
</reference>
<dbReference type="EMBL" id="AF060981">
    <property type="protein sequence ID" value="AAC72302.1"/>
    <property type="molecule type" value="mRNA"/>
</dbReference>
<dbReference type="EMBL" id="EU016100">
    <property type="protein sequence ID" value="ABV89736.1"/>
    <property type="molecule type" value="mRNA"/>
</dbReference>
<dbReference type="EMBL" id="EU016101">
    <property type="protein sequence ID" value="ABV89737.1"/>
    <property type="molecule type" value="mRNA"/>
</dbReference>
<dbReference type="EMBL" id="AL390725">
    <property type="protein sequence ID" value="CAI13714.1"/>
    <property type="molecule type" value="Genomic_DNA"/>
</dbReference>
<dbReference type="EMBL" id="AC242845">
    <property type="status" value="NOT_ANNOTATED_CDS"/>
    <property type="molecule type" value="Genomic_DNA"/>
</dbReference>
<dbReference type="EMBL" id="BC014465">
    <property type="protein sequence ID" value="AAH14465.1"/>
    <property type="molecule type" value="mRNA"/>
</dbReference>
<dbReference type="CCDS" id="CCDS72861.1">
    <molecule id="O95971-1"/>
</dbReference>
<dbReference type="RefSeq" id="NP_008984.1">
    <molecule id="O95971-1"/>
    <property type="nucleotide sequence ID" value="NM_007053.4"/>
</dbReference>
<dbReference type="RefSeq" id="XP_005272986.1">
    <molecule id="O95971-3"/>
    <property type="nucleotide sequence ID" value="XM_005272929.4"/>
</dbReference>
<dbReference type="RefSeq" id="XP_011507406.1">
    <molecule id="O95971-3"/>
    <property type="nucleotide sequence ID" value="XM_011509104.3"/>
</dbReference>
<dbReference type="RefSeq" id="XP_054189951.1">
    <molecule id="O95971-3"/>
    <property type="nucleotide sequence ID" value="XM_054333976.1"/>
</dbReference>
<dbReference type="RefSeq" id="XP_054189952.1">
    <molecule id="O95971-3"/>
    <property type="nucleotide sequence ID" value="XM_054333977.1"/>
</dbReference>
<dbReference type="PDB" id="6NG3">
    <property type="method" value="X-ray"/>
    <property type="resolution" value="2.88 A"/>
    <property type="chains" value="A=27-144"/>
</dbReference>
<dbReference type="PDB" id="6NG9">
    <property type="method" value="X-ray"/>
    <property type="resolution" value="1.95 A"/>
    <property type="chains" value="A/B=27-144"/>
</dbReference>
<dbReference type="PDB" id="6NGG">
    <property type="method" value="X-ray"/>
    <property type="resolution" value="1.95 A"/>
    <property type="chains" value="A/B=27-144"/>
</dbReference>
<dbReference type="PDB" id="7MSG">
    <property type="method" value="X-ray"/>
    <property type="resolution" value="3.50 A"/>
    <property type="chains" value="D/E/F=27-144"/>
</dbReference>
<dbReference type="PDBsum" id="6NG3"/>
<dbReference type="PDBsum" id="6NG9"/>
<dbReference type="PDBsum" id="6NGG"/>
<dbReference type="PDBsum" id="7MSG"/>
<dbReference type="SMR" id="O95971"/>
<dbReference type="BioGRID" id="116299">
    <property type="interactions" value="48"/>
</dbReference>
<dbReference type="FunCoup" id="O95971">
    <property type="interactions" value="73"/>
</dbReference>
<dbReference type="IntAct" id="O95971">
    <property type="interactions" value="48"/>
</dbReference>
<dbReference type="MINT" id="O95971"/>
<dbReference type="STRING" id="9606.ENSP00000358294"/>
<dbReference type="GlyCosmos" id="O95971">
    <property type="glycosylation" value="2 sites, No reported glycans"/>
</dbReference>
<dbReference type="GlyGen" id="O95971">
    <property type="glycosylation" value="2 sites"/>
</dbReference>
<dbReference type="iPTMnet" id="O95971"/>
<dbReference type="PhosphoSitePlus" id="O95971"/>
<dbReference type="BioMuta" id="CD160"/>
<dbReference type="MassIVE" id="O95971"/>
<dbReference type="PaxDb" id="9606-ENSP00000235933"/>
<dbReference type="PeptideAtlas" id="O95971"/>
<dbReference type="ProteomicsDB" id="51154"/>
<dbReference type="Antibodypedia" id="33967">
    <property type="antibodies" value="639 antibodies from 36 providers"/>
</dbReference>
<dbReference type="DNASU" id="11126"/>
<dbReference type="Ensembl" id="ENST00000235933.10">
    <molecule id="O95971-1"/>
    <property type="protein sequence ID" value="ENSP00000235933.6"/>
    <property type="gene ID" value="ENSG00000117281.16"/>
</dbReference>
<dbReference type="Ensembl" id="ENST00000369288.7">
    <molecule id="O95971-1"/>
    <property type="protein sequence ID" value="ENSP00000358294.1"/>
    <property type="gene ID" value="ENSG00000117281.16"/>
</dbReference>
<dbReference type="Ensembl" id="ENST00000401557.7">
    <molecule id="O95971-3"/>
    <property type="protein sequence ID" value="ENSP00000385199.4"/>
    <property type="gene ID" value="ENSG00000117281.16"/>
</dbReference>
<dbReference type="Ensembl" id="ENST00000584442.2">
    <molecule id="O95971-2"/>
    <property type="protein sequence ID" value="ENSP00000462594.2"/>
    <property type="gene ID" value="ENSG00000117281.16"/>
</dbReference>
<dbReference type="Ensembl" id="ENST00000616463.1">
    <molecule id="O95971-4"/>
    <property type="protein sequence ID" value="ENSP00000483935.1"/>
    <property type="gene ID" value="ENSG00000117281.16"/>
</dbReference>
<dbReference type="GeneID" id="11126"/>
<dbReference type="KEGG" id="hsa:11126"/>
<dbReference type="MANE-Select" id="ENST00000369288.7">
    <property type="protein sequence ID" value="ENSP00000358294.1"/>
    <property type="RefSeq nucleotide sequence ID" value="NM_007053.4"/>
    <property type="RefSeq protein sequence ID" value="NP_008984.1"/>
</dbReference>
<dbReference type="UCSC" id="uc010oyz.3">
    <property type="organism name" value="human"/>
</dbReference>
<dbReference type="UCSC" id="uc031ute.2">
    <property type="organism name" value="human"/>
</dbReference>
<dbReference type="AGR" id="HGNC:17013"/>
<dbReference type="CTD" id="11126"/>
<dbReference type="DisGeNET" id="11126"/>
<dbReference type="GeneCards" id="CD160"/>
<dbReference type="HGNC" id="HGNC:17013">
    <property type="gene designation" value="CD160"/>
</dbReference>
<dbReference type="HPA" id="ENSG00000117281">
    <property type="expression patterns" value="Group enriched (bone marrow, brain, intestine, liver, lymphoid tissue)"/>
</dbReference>
<dbReference type="MIM" id="604463">
    <property type="type" value="gene"/>
</dbReference>
<dbReference type="neXtProt" id="NX_O95971"/>
<dbReference type="OpenTargets" id="ENSG00000117281"/>
<dbReference type="PharmGKB" id="PA134943137"/>
<dbReference type="VEuPathDB" id="HostDB:ENSG00000117281"/>
<dbReference type="eggNOG" id="ENOG502RR8D">
    <property type="taxonomic scope" value="Eukaryota"/>
</dbReference>
<dbReference type="GeneTree" id="ENSGT00390000007258"/>
<dbReference type="HOGENOM" id="CLU_103393_0_0_1"/>
<dbReference type="InParanoid" id="O95971"/>
<dbReference type="OMA" id="HLQGHFF"/>
<dbReference type="OrthoDB" id="9450911at2759"/>
<dbReference type="PAN-GO" id="O95971">
    <property type="GO annotations" value="1 GO annotation based on evolutionary models"/>
</dbReference>
<dbReference type="PhylomeDB" id="O95971"/>
<dbReference type="TreeFam" id="TF338321"/>
<dbReference type="PathwayCommons" id="O95971"/>
<dbReference type="Reactome" id="R-HSA-198933">
    <property type="pathway name" value="Immunoregulatory interactions between a Lymphoid and a non-Lymphoid cell"/>
</dbReference>
<dbReference type="SignaLink" id="O95971"/>
<dbReference type="BioGRID-ORCS" id="11126">
    <property type="hits" value="8 hits in 1152 CRISPR screens"/>
</dbReference>
<dbReference type="GeneWiki" id="CD160"/>
<dbReference type="GenomeRNAi" id="11126"/>
<dbReference type="Pharos" id="O95971">
    <property type="development level" value="Tbio"/>
</dbReference>
<dbReference type="PRO" id="PR:O95971"/>
<dbReference type="Proteomes" id="UP000005640">
    <property type="component" value="Chromosome 1"/>
</dbReference>
<dbReference type="RNAct" id="O95971">
    <property type="molecule type" value="protein"/>
</dbReference>
<dbReference type="Bgee" id="ENSG00000117281">
    <property type="expression patterns" value="Expressed in granulocyte and 112 other cell types or tissues"/>
</dbReference>
<dbReference type="ExpressionAtlas" id="O95971">
    <property type="expression patterns" value="baseline and differential"/>
</dbReference>
<dbReference type="GO" id="GO:0005576">
    <property type="term" value="C:extracellular region"/>
    <property type="evidence" value="ECO:0007669"/>
    <property type="project" value="UniProtKB-SubCell"/>
</dbReference>
<dbReference type="GO" id="GO:0005886">
    <property type="term" value="C:plasma membrane"/>
    <property type="evidence" value="ECO:0000314"/>
    <property type="project" value="UniProtKB"/>
</dbReference>
<dbReference type="GO" id="GO:0098552">
    <property type="term" value="C:side of membrane"/>
    <property type="evidence" value="ECO:0007669"/>
    <property type="project" value="UniProtKB-KW"/>
</dbReference>
<dbReference type="GO" id="GO:0032397">
    <property type="term" value="F:activating MHC class I receptor activity"/>
    <property type="evidence" value="ECO:0000314"/>
    <property type="project" value="UniProtKB"/>
</dbReference>
<dbReference type="GO" id="GO:0019900">
    <property type="term" value="F:kinase binding"/>
    <property type="evidence" value="ECO:0000353"/>
    <property type="project" value="UniProtKB"/>
</dbReference>
<dbReference type="GO" id="GO:0023024">
    <property type="term" value="F:MHC class I protein complex binding"/>
    <property type="evidence" value="ECO:0007669"/>
    <property type="project" value="Ensembl"/>
</dbReference>
<dbReference type="GO" id="GO:0032393">
    <property type="term" value="F:MHC class I receptor activity"/>
    <property type="evidence" value="ECO:0000314"/>
    <property type="project" value="HGNC-UCL"/>
</dbReference>
<dbReference type="GO" id="GO:0032394">
    <property type="term" value="F:MHC class Ib receptor activity"/>
    <property type="evidence" value="ECO:0000314"/>
    <property type="project" value="UniProtKB"/>
</dbReference>
<dbReference type="GO" id="GO:0005102">
    <property type="term" value="F:signaling receptor binding"/>
    <property type="evidence" value="ECO:0000314"/>
    <property type="project" value="HGNC-UCL"/>
</dbReference>
<dbReference type="GO" id="GO:0002250">
    <property type="term" value="P:adaptive immune response"/>
    <property type="evidence" value="ECO:0007669"/>
    <property type="project" value="UniProtKB-KW"/>
</dbReference>
<dbReference type="GO" id="GO:0001525">
    <property type="term" value="P:angiogenesis"/>
    <property type="evidence" value="ECO:0007669"/>
    <property type="project" value="UniProtKB-KW"/>
</dbReference>
<dbReference type="GO" id="GO:0050829">
    <property type="term" value="P:defense response to Gram-negative bacterium"/>
    <property type="evidence" value="ECO:0007669"/>
    <property type="project" value="Ensembl"/>
</dbReference>
<dbReference type="GO" id="GO:0045087">
    <property type="term" value="P:innate immune response"/>
    <property type="evidence" value="ECO:0007669"/>
    <property type="project" value="UniProtKB-KW"/>
</dbReference>
<dbReference type="GO" id="GO:0002385">
    <property type="term" value="P:mucosal immune response"/>
    <property type="evidence" value="ECO:0007669"/>
    <property type="project" value="Ensembl"/>
</dbReference>
<dbReference type="GO" id="GO:1905675">
    <property type="term" value="P:negative regulation of adaptive immune memory response"/>
    <property type="evidence" value="ECO:0000314"/>
    <property type="project" value="UniProtKB"/>
</dbReference>
<dbReference type="GO" id="GO:0016525">
    <property type="term" value="P:negative regulation of angiogenesis"/>
    <property type="evidence" value="ECO:0000314"/>
    <property type="project" value="UniProtKB"/>
</dbReference>
<dbReference type="GO" id="GO:1900280">
    <property type="term" value="P:negative regulation of CD4-positive, alpha-beta T cell costimulation"/>
    <property type="evidence" value="ECO:0000314"/>
    <property type="project" value="UniProtKB"/>
</dbReference>
<dbReference type="GO" id="GO:0050860">
    <property type="term" value="P:negative regulation of T cell receptor signaling pathway"/>
    <property type="evidence" value="ECO:0000314"/>
    <property type="project" value="UniProtKB"/>
</dbReference>
<dbReference type="GO" id="GO:0043491">
    <property type="term" value="P:phosphatidylinositol 3-kinase/protein kinase B signal transduction"/>
    <property type="evidence" value="ECO:0000314"/>
    <property type="project" value="UniProtKB"/>
</dbReference>
<dbReference type="GO" id="GO:2000353">
    <property type="term" value="P:positive regulation of endothelial cell apoptotic process"/>
    <property type="evidence" value="ECO:0000314"/>
    <property type="project" value="UniProtKB"/>
</dbReference>
<dbReference type="GO" id="GO:0002729">
    <property type="term" value="P:positive regulation of natural killer cell cytokine production"/>
    <property type="evidence" value="ECO:0000314"/>
    <property type="project" value="UniProtKB"/>
</dbReference>
<dbReference type="GO" id="GO:0043323">
    <property type="term" value="P:positive regulation of natural killer cell degranulation"/>
    <property type="evidence" value="ECO:0000314"/>
    <property type="project" value="UniProtKB"/>
</dbReference>
<dbReference type="GO" id="GO:0045954">
    <property type="term" value="P:positive regulation of natural killer cell mediated cytotoxicity"/>
    <property type="evidence" value="ECO:0000314"/>
    <property type="project" value="UniProtKB"/>
</dbReference>
<dbReference type="GO" id="GO:0002857">
    <property type="term" value="P:positive regulation of natural killer cell mediated immune response to tumor cell"/>
    <property type="evidence" value="ECO:0007669"/>
    <property type="project" value="Ensembl"/>
</dbReference>
<dbReference type="GO" id="GO:0032729">
    <property type="term" value="P:positive regulation of type II interferon production"/>
    <property type="evidence" value="ECO:0007669"/>
    <property type="project" value="Ensembl"/>
</dbReference>
<dbReference type="GO" id="GO:0031295">
    <property type="term" value="P:T cell costimulation"/>
    <property type="evidence" value="ECO:0000314"/>
    <property type="project" value="UniProtKB"/>
</dbReference>
<dbReference type="CDD" id="cd21392">
    <property type="entry name" value="IgC2_CD160"/>
    <property type="match status" value="1"/>
</dbReference>
<dbReference type="FunFam" id="2.60.40.10:FF:002097">
    <property type="entry name" value="CD160 antigen"/>
    <property type="match status" value="1"/>
</dbReference>
<dbReference type="Gene3D" id="2.60.40.10">
    <property type="entry name" value="Immunoglobulins"/>
    <property type="match status" value="1"/>
</dbReference>
<dbReference type="InterPro" id="IPR042385">
    <property type="entry name" value="CD160"/>
</dbReference>
<dbReference type="InterPro" id="IPR036179">
    <property type="entry name" value="Ig-like_dom_sf"/>
</dbReference>
<dbReference type="InterPro" id="IPR013783">
    <property type="entry name" value="Ig-like_fold"/>
</dbReference>
<dbReference type="PANTHER" id="PTHR15425">
    <property type="entry name" value="CD160 ANTIGEN"/>
    <property type="match status" value="1"/>
</dbReference>
<dbReference type="PANTHER" id="PTHR15425:SF0">
    <property type="entry name" value="CD160 ANTIGEN"/>
    <property type="match status" value="1"/>
</dbReference>
<dbReference type="SUPFAM" id="SSF48726">
    <property type="entry name" value="Immunoglobulin"/>
    <property type="match status" value="1"/>
</dbReference>
<evidence type="ECO:0000250" key="1"/>
<evidence type="ECO:0000250" key="2">
    <source>
        <dbReference type="UniProtKB" id="O88875"/>
    </source>
</evidence>
<evidence type="ECO:0000255" key="3"/>
<evidence type="ECO:0000269" key="4">
    <source>
    </source>
</evidence>
<evidence type="ECO:0000269" key="5">
    <source>
    </source>
</evidence>
<evidence type="ECO:0000269" key="6">
    <source>
    </source>
</evidence>
<evidence type="ECO:0000269" key="7">
    <source>
    </source>
</evidence>
<evidence type="ECO:0000269" key="8">
    <source>
    </source>
</evidence>
<evidence type="ECO:0000269" key="9">
    <source>
    </source>
</evidence>
<evidence type="ECO:0000269" key="10">
    <source>
    </source>
</evidence>
<evidence type="ECO:0000269" key="11">
    <source>
    </source>
</evidence>
<evidence type="ECO:0000269" key="12">
    <source>
    </source>
</evidence>
<evidence type="ECO:0000269" key="13">
    <source>
    </source>
</evidence>
<evidence type="ECO:0000269" key="14">
    <source>
    </source>
</evidence>
<evidence type="ECO:0000303" key="15">
    <source>
    </source>
</evidence>
<evidence type="ECO:0000303" key="16">
    <source>
    </source>
</evidence>
<evidence type="ECO:0000303" key="17">
    <source>
    </source>
</evidence>
<evidence type="ECO:0000303" key="18">
    <source>
    </source>
</evidence>
<evidence type="ECO:0000305" key="19">
    <source>
    </source>
</evidence>
<evidence type="ECO:0000305" key="20">
    <source>
    </source>
</evidence>
<evidence type="ECO:0000305" key="21">
    <source>
    </source>
</evidence>
<evidence type="ECO:0000305" key="22">
    <source>
    </source>
</evidence>
<evidence type="ECO:0000312" key="23">
    <source>
        <dbReference type="HGNC" id="HGNC:17013"/>
    </source>
</evidence>
<evidence type="ECO:0007829" key="24">
    <source>
        <dbReference type="PDB" id="6NG3"/>
    </source>
</evidence>
<evidence type="ECO:0007829" key="25">
    <source>
        <dbReference type="PDB" id="6NGG"/>
    </source>
</evidence>
<keyword id="KW-0002">3D-structure</keyword>
<keyword id="KW-1064">Adaptive immunity</keyword>
<keyword id="KW-0025">Alternative splicing</keyword>
<keyword id="KW-0037">Angiogenesis</keyword>
<keyword id="KW-1003">Cell membrane</keyword>
<keyword id="KW-1015">Disulfide bond</keyword>
<keyword id="KW-0325">Glycoprotein</keyword>
<keyword id="KW-0336">GPI-anchor</keyword>
<keyword id="KW-0391">Immunity</keyword>
<keyword id="KW-0393">Immunoglobulin domain</keyword>
<keyword id="KW-0399">Innate immunity</keyword>
<keyword id="KW-0449">Lipoprotein</keyword>
<keyword id="KW-0472">Membrane</keyword>
<keyword id="KW-1267">Proteomics identification</keyword>
<keyword id="KW-0675">Receptor</keyword>
<keyword id="KW-1185">Reference proteome</keyword>
<keyword id="KW-0964">Secreted</keyword>
<keyword id="KW-0732">Signal</keyword>
<organism>
    <name type="scientific">Homo sapiens</name>
    <name type="common">Human</name>
    <dbReference type="NCBI Taxonomy" id="9606"/>
    <lineage>
        <taxon>Eukaryota</taxon>
        <taxon>Metazoa</taxon>
        <taxon>Chordata</taxon>
        <taxon>Craniata</taxon>
        <taxon>Vertebrata</taxon>
        <taxon>Euteleostomi</taxon>
        <taxon>Mammalia</taxon>
        <taxon>Eutheria</taxon>
        <taxon>Euarchontoglires</taxon>
        <taxon>Primates</taxon>
        <taxon>Haplorrhini</taxon>
        <taxon>Catarrhini</taxon>
        <taxon>Hominidae</taxon>
        <taxon>Homo</taxon>
    </lineage>
</organism>